<proteinExistence type="evidence at protein level"/>
<accession>Q63569</accession>
<accession>P97638</accession>
<reference key="1">
    <citation type="journal article" date="1996" name="Biochem. Biophys. Res. Commun.">
        <title>Structures of the rat proteasomal ATPases: determination of highly conserved structural motifs and rules for their spacing.</title>
        <authorList>
            <person name="Makino Y."/>
            <person name="Yogosawa S."/>
            <person name="Kanemaki M."/>
            <person name="Yoshida T."/>
            <person name="Yamano K."/>
            <person name="Kishimoto T."/>
            <person name="Moncollin V."/>
            <person name="Egly J.-M."/>
            <person name="Muramatsu M."/>
            <person name="Tamura T."/>
        </authorList>
    </citation>
    <scope>NUCLEOTIDE SEQUENCE [MRNA]</scope>
    <source>
        <tissue>Liver</tissue>
    </source>
</reference>
<reference key="2">
    <citation type="journal article" date="1997" name="Mol. Reprod. Dev.">
        <title>A protein associated with the manchette during rat spermiogenesis is encoded by a gene of the TBP-1-like subfamily with highly conserved ATPase and protease domains.</title>
        <authorList>
            <person name="Rivkin E."/>
            <person name="Cullinan E.B."/>
            <person name="Tres L.L."/>
            <person name="Kierszenbaum A.L."/>
        </authorList>
    </citation>
    <scope>NUCLEOTIDE SEQUENCE [MRNA]</scope>
    <source>
        <strain>Sprague-Dawley</strain>
    </source>
</reference>
<name>PRS6A_RAT</name>
<evidence type="ECO:0000250" key="1">
    <source>
        <dbReference type="UniProtKB" id="O88685"/>
    </source>
</evidence>
<evidence type="ECO:0000250" key="2">
    <source>
        <dbReference type="UniProtKB" id="P17980"/>
    </source>
</evidence>
<evidence type="ECO:0000255" key="3"/>
<evidence type="ECO:0000305" key="4"/>
<protein>
    <recommendedName>
        <fullName>26S proteasome regulatory subunit 6A</fullName>
    </recommendedName>
    <alternativeName>
        <fullName>26S proteasome AAA-ATPase subunit RPT5</fullName>
    </alternativeName>
    <alternativeName>
        <fullName>Proteasome 26S subunit ATPase 3</fullName>
    </alternativeName>
    <alternativeName>
        <fullName>Spermatogenic cell/sperm-associated Tat-binding protein homolog SATA</fullName>
    </alternativeName>
    <alternativeName>
        <fullName>Tat-binding protein 1</fullName>
        <shortName>TBP-1</shortName>
    </alternativeName>
</protein>
<gene>
    <name type="primary">Psmc3</name>
    <name type="synonym">Tbp1</name>
</gene>
<comment type="function">
    <text evidence="2">Component of the 26S proteasome, a multiprotein complex involved in the ATP-dependent degradation of ubiquitinated proteins. This complex plays a key role in the maintenance of protein homeostasis by removing misfolded or damaged proteins, which could impair cellular functions, and by removing proteins whose functions are no longer required. Therefore, the proteasome participates in numerous cellular processes, including cell cycle progression, apoptosis, or DNA damage repair. PSMC3 belongs to the heterohexameric ring of AAA (ATPases associated with diverse cellular activities) proteins that unfolds ubiquitinated target proteins that are concurrently translocated into a proteolytic chamber and degraded into peptides.</text>
</comment>
<comment type="subunit">
    <text evidence="2">Component of the 19S proteasome regulatory particle complex. The 26S proteasome consists of a 20S core particle (CP) and two 19S regulatory subunits (RP). The regulatory particle is made of a lid composed of 9 subunits, a base containing 6 ATPases including PSMC3 and few additional components. Interacts with PAAF1.</text>
</comment>
<comment type="subcellular location">
    <subcellularLocation>
        <location evidence="4">Cytoplasm</location>
    </subcellularLocation>
    <subcellularLocation>
        <location evidence="4">Nucleus</location>
    </subcellularLocation>
    <text evidence="1">Colocalizes with TRIM5 in cytoplasmic bodies.</text>
</comment>
<comment type="similarity">
    <text evidence="4">Belongs to the AAA ATPase family.</text>
</comment>
<comment type="sequence caution" evidence="4">
    <conflict type="erroneous initiation">
        <sequence resource="EMBL-CDS" id="AAB70882"/>
    </conflict>
</comment>
<dbReference type="EMBL" id="D83522">
    <property type="protein sequence ID" value="BAA11939.1"/>
    <property type="molecule type" value="mRNA"/>
</dbReference>
<dbReference type="EMBL" id="U77918">
    <property type="protein sequence ID" value="AAB70882.1"/>
    <property type="status" value="ALT_INIT"/>
    <property type="molecule type" value="mRNA"/>
</dbReference>
<dbReference type="RefSeq" id="NP_113783.1">
    <property type="nucleotide sequence ID" value="NM_031595.1"/>
</dbReference>
<dbReference type="PDB" id="6EPC">
    <property type="method" value="EM"/>
    <property type="resolution" value="12.30 A"/>
    <property type="chains" value="M=1-439"/>
</dbReference>
<dbReference type="PDB" id="6EPD">
    <property type="method" value="EM"/>
    <property type="resolution" value="15.40 A"/>
    <property type="chains" value="M=1-439"/>
</dbReference>
<dbReference type="PDB" id="6EPE">
    <property type="method" value="EM"/>
    <property type="resolution" value="12.80 A"/>
    <property type="chains" value="M=1-439"/>
</dbReference>
<dbReference type="PDB" id="6EPF">
    <property type="method" value="EM"/>
    <property type="resolution" value="11.80 A"/>
    <property type="chains" value="M=1-439"/>
</dbReference>
<dbReference type="PDBsum" id="6EPC"/>
<dbReference type="PDBsum" id="6EPD"/>
<dbReference type="PDBsum" id="6EPE"/>
<dbReference type="PDBsum" id="6EPF"/>
<dbReference type="SMR" id="Q63569"/>
<dbReference type="BioGRID" id="248298">
    <property type="interactions" value="9"/>
</dbReference>
<dbReference type="ComplexPortal" id="CPX-8962">
    <property type="entry name" value="19S proteasome regulatory complex"/>
</dbReference>
<dbReference type="ComplexPortal" id="CPX-8965">
    <property type="entry name" value="30S proteasome complex"/>
</dbReference>
<dbReference type="FunCoup" id="Q63569">
    <property type="interactions" value="2891"/>
</dbReference>
<dbReference type="IntAct" id="Q63569">
    <property type="interactions" value="5"/>
</dbReference>
<dbReference type="STRING" id="10116.ENSRNOP00000015757"/>
<dbReference type="iPTMnet" id="Q63569"/>
<dbReference type="PhosphoSitePlus" id="Q63569"/>
<dbReference type="jPOST" id="Q63569"/>
<dbReference type="PaxDb" id="10116-ENSRNOP00000015757"/>
<dbReference type="PeptideAtlas" id="Q63569"/>
<dbReference type="GeneID" id="29677"/>
<dbReference type="KEGG" id="rno:29677"/>
<dbReference type="UCSC" id="RGD:61905">
    <property type="organism name" value="rat"/>
</dbReference>
<dbReference type="AGR" id="RGD:61905"/>
<dbReference type="CTD" id="5702"/>
<dbReference type="RGD" id="61905">
    <property type="gene designation" value="Psmc3"/>
</dbReference>
<dbReference type="eggNOG" id="KOG0652">
    <property type="taxonomic scope" value="Eukaryota"/>
</dbReference>
<dbReference type="InParanoid" id="Q63569"/>
<dbReference type="Reactome" id="R-RNO-1169091">
    <property type="pathway name" value="Activation of NF-kappaB in B cells"/>
</dbReference>
<dbReference type="Reactome" id="R-RNO-1234176">
    <property type="pathway name" value="Oxygen-dependent proline hydroxylation of Hypoxia-inducible Factor Alpha"/>
</dbReference>
<dbReference type="Reactome" id="R-RNO-1236978">
    <property type="pathway name" value="Cross-presentation of soluble exogenous antigens (endosomes)"/>
</dbReference>
<dbReference type="Reactome" id="R-RNO-174084">
    <property type="pathway name" value="Autodegradation of Cdh1 by Cdh1:APC/C"/>
</dbReference>
<dbReference type="Reactome" id="R-RNO-174113">
    <property type="pathway name" value="SCF-beta-TrCP mediated degradation of Emi1"/>
</dbReference>
<dbReference type="Reactome" id="R-RNO-174154">
    <property type="pathway name" value="APC/C:Cdc20 mediated degradation of Securin"/>
</dbReference>
<dbReference type="Reactome" id="R-RNO-174178">
    <property type="pathway name" value="APC/C:Cdh1 mediated degradation of Cdc20 and other APC/C:Cdh1 targeted proteins in late mitosis/early G1"/>
</dbReference>
<dbReference type="Reactome" id="R-RNO-174184">
    <property type="pathway name" value="Cdc20:Phospho-APC/C mediated degradation of Cyclin A"/>
</dbReference>
<dbReference type="Reactome" id="R-RNO-187577">
    <property type="pathway name" value="SCF(Skp2)-mediated degradation of p27/p21"/>
</dbReference>
<dbReference type="Reactome" id="R-RNO-195253">
    <property type="pathway name" value="Degradation of beta-catenin by the destruction complex"/>
</dbReference>
<dbReference type="Reactome" id="R-RNO-2467813">
    <property type="pathway name" value="Separation of Sister Chromatids"/>
</dbReference>
<dbReference type="Reactome" id="R-RNO-349425">
    <property type="pathway name" value="Autodegradation of the E3 ubiquitin ligase COP1"/>
</dbReference>
<dbReference type="Reactome" id="R-RNO-350562">
    <property type="pathway name" value="Regulation of ornithine decarboxylase (ODC)"/>
</dbReference>
<dbReference type="Reactome" id="R-RNO-382556">
    <property type="pathway name" value="ABC-family proteins mediated transport"/>
</dbReference>
<dbReference type="Reactome" id="R-RNO-450408">
    <property type="pathway name" value="AUF1 (hnRNP D0) binds and destabilizes mRNA"/>
</dbReference>
<dbReference type="Reactome" id="R-RNO-4608870">
    <property type="pathway name" value="Asymmetric localization of PCP proteins"/>
</dbReference>
<dbReference type="Reactome" id="R-RNO-4641257">
    <property type="pathway name" value="Degradation of AXIN"/>
</dbReference>
<dbReference type="Reactome" id="R-RNO-4641258">
    <property type="pathway name" value="Degradation of DVL"/>
</dbReference>
<dbReference type="Reactome" id="R-RNO-5358346">
    <property type="pathway name" value="Hedgehog ligand biogenesis"/>
</dbReference>
<dbReference type="Reactome" id="R-RNO-5607761">
    <property type="pathway name" value="Dectin-1 mediated noncanonical NF-kB signaling"/>
</dbReference>
<dbReference type="Reactome" id="R-RNO-5610780">
    <property type="pathway name" value="Degradation of GLI1 by the proteasome"/>
</dbReference>
<dbReference type="Reactome" id="R-RNO-5610785">
    <property type="pathway name" value="GLI3 is processed to GLI3R by the proteasome"/>
</dbReference>
<dbReference type="Reactome" id="R-RNO-5632684">
    <property type="pathway name" value="Hedgehog 'on' state"/>
</dbReference>
<dbReference type="Reactome" id="R-RNO-5658442">
    <property type="pathway name" value="Regulation of RAS by GAPs"/>
</dbReference>
<dbReference type="Reactome" id="R-RNO-5668541">
    <property type="pathway name" value="TNFR2 non-canonical NF-kB pathway"/>
</dbReference>
<dbReference type="Reactome" id="R-RNO-5676590">
    <property type="pathway name" value="NIK--&gt;noncanonical NF-kB signaling"/>
</dbReference>
<dbReference type="Reactome" id="R-RNO-5687128">
    <property type="pathway name" value="MAPK6/MAPK4 signaling"/>
</dbReference>
<dbReference type="Reactome" id="R-RNO-5689603">
    <property type="pathway name" value="UCH proteinases"/>
</dbReference>
<dbReference type="Reactome" id="R-RNO-5689880">
    <property type="pathway name" value="Ub-specific processing proteases"/>
</dbReference>
<dbReference type="Reactome" id="R-RNO-6798695">
    <property type="pathway name" value="Neutrophil degranulation"/>
</dbReference>
<dbReference type="Reactome" id="R-RNO-68867">
    <property type="pathway name" value="Assembly of the pre-replicative complex"/>
</dbReference>
<dbReference type="Reactome" id="R-RNO-68949">
    <property type="pathway name" value="Orc1 removal from chromatin"/>
</dbReference>
<dbReference type="Reactome" id="R-RNO-69017">
    <property type="pathway name" value="CDK-mediated phosphorylation and removal of Cdc6"/>
</dbReference>
<dbReference type="Reactome" id="R-RNO-69481">
    <property type="pathway name" value="G2/M Checkpoints"/>
</dbReference>
<dbReference type="Reactome" id="R-RNO-69601">
    <property type="pathway name" value="Ubiquitin Mediated Degradation of Phosphorylated Cdc25A"/>
</dbReference>
<dbReference type="Reactome" id="R-RNO-75815">
    <property type="pathway name" value="Ubiquitin-dependent degradation of Cyclin D"/>
</dbReference>
<dbReference type="Reactome" id="R-RNO-8852276">
    <property type="pathway name" value="The role of GTSE1 in G2/M progression after G2 checkpoint"/>
</dbReference>
<dbReference type="Reactome" id="R-RNO-8854050">
    <property type="pathway name" value="FBXL7 down-regulates AURKA during mitotic entry and in early mitosis"/>
</dbReference>
<dbReference type="Reactome" id="R-RNO-8939236">
    <property type="pathway name" value="RUNX1 regulates transcription of genes involved in differentiation of HSCs"/>
</dbReference>
<dbReference type="Reactome" id="R-RNO-8941858">
    <property type="pathway name" value="Regulation of RUNX3 expression and activity"/>
</dbReference>
<dbReference type="Reactome" id="R-RNO-8948751">
    <property type="pathway name" value="Regulation of PTEN stability and activity"/>
</dbReference>
<dbReference type="Reactome" id="R-RNO-8951664">
    <property type="pathway name" value="Neddylation"/>
</dbReference>
<dbReference type="Reactome" id="R-RNO-9755511">
    <property type="pathway name" value="KEAP1-NFE2L2 pathway"/>
</dbReference>
<dbReference type="Reactome" id="R-RNO-9762114">
    <property type="pathway name" value="GSK3B and BTRC:CUL1-mediated-degradation of NFE2L2"/>
</dbReference>
<dbReference type="Reactome" id="R-RNO-983168">
    <property type="pathway name" value="Antigen processing: Ubiquitination &amp; Proteasome degradation"/>
</dbReference>
<dbReference type="Reactome" id="R-RNO-9907900">
    <property type="pathway name" value="Proteasome assembly"/>
</dbReference>
<dbReference type="PRO" id="PR:Q63569"/>
<dbReference type="Proteomes" id="UP000002494">
    <property type="component" value="Unplaced"/>
</dbReference>
<dbReference type="GO" id="GO:0005634">
    <property type="term" value="C:nucleus"/>
    <property type="evidence" value="ECO:0000266"/>
    <property type="project" value="RGD"/>
</dbReference>
<dbReference type="GO" id="GO:0000932">
    <property type="term" value="C:P-body"/>
    <property type="evidence" value="ECO:0000250"/>
    <property type="project" value="UniProtKB"/>
</dbReference>
<dbReference type="GO" id="GO:0048471">
    <property type="term" value="C:perinuclear region of cytoplasm"/>
    <property type="evidence" value="ECO:0000314"/>
    <property type="project" value="RGD"/>
</dbReference>
<dbReference type="GO" id="GO:0022624">
    <property type="term" value="C:proteasome accessory complex"/>
    <property type="evidence" value="ECO:0000250"/>
    <property type="project" value="UniProtKB"/>
</dbReference>
<dbReference type="GO" id="GO:0000502">
    <property type="term" value="C:proteasome complex"/>
    <property type="evidence" value="ECO:0000266"/>
    <property type="project" value="RGD"/>
</dbReference>
<dbReference type="GO" id="GO:0008540">
    <property type="term" value="C:proteasome regulatory particle, base subcomplex"/>
    <property type="evidence" value="ECO:0000318"/>
    <property type="project" value="GO_Central"/>
</dbReference>
<dbReference type="GO" id="GO:0005524">
    <property type="term" value="F:ATP binding"/>
    <property type="evidence" value="ECO:0007669"/>
    <property type="project" value="UniProtKB-KW"/>
</dbReference>
<dbReference type="GO" id="GO:0016887">
    <property type="term" value="F:ATP hydrolysis activity"/>
    <property type="evidence" value="ECO:0007669"/>
    <property type="project" value="InterPro"/>
</dbReference>
<dbReference type="GO" id="GO:0042802">
    <property type="term" value="F:identical protein binding"/>
    <property type="evidence" value="ECO:0000266"/>
    <property type="project" value="RGD"/>
</dbReference>
<dbReference type="GO" id="GO:0036402">
    <property type="term" value="F:proteasome-activating activity"/>
    <property type="evidence" value="ECO:0000318"/>
    <property type="project" value="GO_Central"/>
</dbReference>
<dbReference type="GO" id="GO:0001824">
    <property type="term" value="P:blastocyst development"/>
    <property type="evidence" value="ECO:0000266"/>
    <property type="project" value="RGD"/>
</dbReference>
<dbReference type="GO" id="GO:0043921">
    <property type="term" value="P:modulation by host of viral transcription"/>
    <property type="evidence" value="ECO:0000266"/>
    <property type="project" value="RGD"/>
</dbReference>
<dbReference type="GO" id="GO:0045944">
    <property type="term" value="P:positive regulation of transcription by RNA polymerase II"/>
    <property type="evidence" value="ECO:0000266"/>
    <property type="project" value="RGD"/>
</dbReference>
<dbReference type="GO" id="GO:0043161">
    <property type="term" value="P:proteasome-mediated ubiquitin-dependent protein catabolic process"/>
    <property type="evidence" value="ECO:0000318"/>
    <property type="project" value="GO_Central"/>
</dbReference>
<dbReference type="FunFam" id="1.10.8.60:FF:000009">
    <property type="entry name" value="26S protease regulatory subunit 6A"/>
    <property type="match status" value="1"/>
</dbReference>
<dbReference type="FunFam" id="2.40.50.140:FF:000076">
    <property type="entry name" value="26S protease regulatory subunit 6A"/>
    <property type="match status" value="1"/>
</dbReference>
<dbReference type="FunFam" id="3.40.50.300:FF:000037">
    <property type="entry name" value="26S protease regulatory subunit 6A"/>
    <property type="match status" value="1"/>
</dbReference>
<dbReference type="Gene3D" id="1.10.8.60">
    <property type="match status" value="1"/>
</dbReference>
<dbReference type="Gene3D" id="2.40.50.140">
    <property type="entry name" value="Nucleic acid-binding proteins"/>
    <property type="match status" value="1"/>
</dbReference>
<dbReference type="Gene3D" id="3.40.50.300">
    <property type="entry name" value="P-loop containing nucleotide triphosphate hydrolases"/>
    <property type="match status" value="1"/>
</dbReference>
<dbReference type="InterPro" id="IPR050221">
    <property type="entry name" value="26S_Proteasome_ATPase"/>
</dbReference>
<dbReference type="InterPro" id="IPR003593">
    <property type="entry name" value="AAA+_ATPase"/>
</dbReference>
<dbReference type="InterPro" id="IPR041569">
    <property type="entry name" value="AAA_lid_3"/>
</dbReference>
<dbReference type="InterPro" id="IPR003959">
    <property type="entry name" value="ATPase_AAA_core"/>
</dbReference>
<dbReference type="InterPro" id="IPR003960">
    <property type="entry name" value="ATPase_AAA_CS"/>
</dbReference>
<dbReference type="InterPro" id="IPR012340">
    <property type="entry name" value="NA-bd_OB-fold"/>
</dbReference>
<dbReference type="InterPro" id="IPR027417">
    <property type="entry name" value="P-loop_NTPase"/>
</dbReference>
<dbReference type="InterPro" id="IPR032501">
    <property type="entry name" value="Prot_ATP_ID_OB_2nd"/>
</dbReference>
<dbReference type="PANTHER" id="PTHR23073">
    <property type="entry name" value="26S PROTEASOME REGULATORY SUBUNIT"/>
    <property type="match status" value="1"/>
</dbReference>
<dbReference type="Pfam" id="PF00004">
    <property type="entry name" value="AAA"/>
    <property type="match status" value="1"/>
</dbReference>
<dbReference type="Pfam" id="PF17862">
    <property type="entry name" value="AAA_lid_3"/>
    <property type="match status" value="1"/>
</dbReference>
<dbReference type="Pfam" id="PF16450">
    <property type="entry name" value="Prot_ATP_ID_OB_C"/>
    <property type="match status" value="1"/>
</dbReference>
<dbReference type="SMART" id="SM00382">
    <property type="entry name" value="AAA"/>
    <property type="match status" value="1"/>
</dbReference>
<dbReference type="SUPFAM" id="SSF52540">
    <property type="entry name" value="P-loop containing nucleoside triphosphate hydrolases"/>
    <property type="match status" value="1"/>
</dbReference>
<dbReference type="PROSITE" id="PS00674">
    <property type="entry name" value="AAA"/>
    <property type="match status" value="1"/>
</dbReference>
<sequence>MNLLPTPESPVTRQEKMATVWDEAEQDGIGEEVLKMSTEEIVQRTRLLDSEIKIMKSEVLRVTHELQAMKDKIKENSEKIKVNKTLPYLVSNVIELLDVDPNDQEEDGANIDLDSQRKGKCAVIKTSTRQTYFLPVIGLVDAEKLKPGDLVGVNKDSYLILETLPTEYDSRVKAMEVDERPTEQYSDIGGLDKQIQELVEAIVLPMNHKEKFENLGIQPPKGVLMYGPPGTGKTLLARACAAQTKATFLKLAGPQLVQMFIGDGAKLVRDAFALAKEKAPSIIFIDELDAIGTKRFDSEKAGDREVQRTMLELLNQLDGFQPNTQVKVIAATNRVDILDPALLRSGRLDRKIEFPMPNEEARARIMQIHSRKMNVSPDVNYEELARCTDDFNGAQCKAVCVEAGMIALRRGATELTHEDYMEGILEVQAKKKANLQYYA</sequence>
<feature type="chain" id="PRO_0000084700" description="26S proteasome regulatory subunit 6A">
    <location>
        <begin position="1"/>
        <end position="439"/>
    </location>
</feature>
<feature type="binding site" evidence="3">
    <location>
        <begin position="227"/>
        <end position="234"/>
    </location>
    <ligand>
        <name>ATP</name>
        <dbReference type="ChEBI" id="CHEBI:30616"/>
    </ligand>
</feature>
<feature type="modified residue" description="N-acetylmethionine" evidence="2">
    <location>
        <position position="1"/>
    </location>
</feature>
<feature type="modified residue" description="Phosphoserine" evidence="2">
    <location>
        <position position="9"/>
    </location>
</feature>
<feature type="modified residue" description="Phosphoserine" evidence="2">
    <location>
        <position position="376"/>
    </location>
</feature>
<feature type="sequence conflict" description="In Ref. 2; AAB70882." evidence="4" ref="2">
    <original>K</original>
    <variation>N</variation>
    <location>
        <position position="84"/>
    </location>
</feature>
<feature type="sequence conflict" description="In Ref. 2; AAB70882." evidence="4" ref="2">
    <original>L</original>
    <variation>M</variation>
    <location>
        <position position="317"/>
    </location>
</feature>
<keyword id="KW-0002">3D-structure</keyword>
<keyword id="KW-0007">Acetylation</keyword>
<keyword id="KW-0067">ATP-binding</keyword>
<keyword id="KW-0963">Cytoplasm</keyword>
<keyword id="KW-0547">Nucleotide-binding</keyword>
<keyword id="KW-0539">Nucleus</keyword>
<keyword id="KW-0597">Phosphoprotein</keyword>
<keyword id="KW-0647">Proteasome</keyword>
<keyword id="KW-1185">Reference proteome</keyword>
<organism>
    <name type="scientific">Rattus norvegicus</name>
    <name type="common">Rat</name>
    <dbReference type="NCBI Taxonomy" id="10116"/>
    <lineage>
        <taxon>Eukaryota</taxon>
        <taxon>Metazoa</taxon>
        <taxon>Chordata</taxon>
        <taxon>Craniata</taxon>
        <taxon>Vertebrata</taxon>
        <taxon>Euteleostomi</taxon>
        <taxon>Mammalia</taxon>
        <taxon>Eutheria</taxon>
        <taxon>Euarchontoglires</taxon>
        <taxon>Glires</taxon>
        <taxon>Rodentia</taxon>
        <taxon>Myomorpha</taxon>
        <taxon>Muroidea</taxon>
        <taxon>Muridae</taxon>
        <taxon>Murinae</taxon>
        <taxon>Rattus</taxon>
    </lineage>
</organism>